<accession>B8ENB2</accession>
<sequence>MMKTVRIALDAMGGDFGPEVMLPGAALALERGLNIAFLLFGDEKLIKPYLAAHPALAAVATLHHTNVAVRMDDKPSQALRSGRRNSSMWLSIDAVKKNAADIAVSAGNTGALMAMAKTCLHTMPGVDRPAIAAIWPTIRGRTIVLDVGASIGADARHLVNLAIMGAAMARAVLDVERPTVGLLNIGSEEMKGVDDVKAASKLLREMALPQLDYVGFVEGGDIGRGTVDVVVTEGFSGNIALKTAEGTASQMGQYLREALSRDLMSKIGYFFARKGLATLKAKMDPRNVNGGTFLGLDGVVIKSHGHSDVFGTSVAIEIAYRIARHELLGQIRGALAHSHELASRAPNSQTAGGERAAAVPQSAQLRMDS</sequence>
<evidence type="ECO:0000255" key="1">
    <source>
        <dbReference type="HAMAP-Rule" id="MF_00019"/>
    </source>
</evidence>
<evidence type="ECO:0000256" key="2">
    <source>
        <dbReference type="SAM" id="MobiDB-lite"/>
    </source>
</evidence>
<feature type="chain" id="PRO_1000193141" description="Phosphate acyltransferase">
    <location>
        <begin position="1"/>
        <end position="369"/>
    </location>
</feature>
<feature type="region of interest" description="Disordered" evidence="2">
    <location>
        <begin position="342"/>
        <end position="369"/>
    </location>
</feature>
<dbReference type="EC" id="2.3.1.274" evidence="1"/>
<dbReference type="EMBL" id="CP001280">
    <property type="protein sequence ID" value="ACK49625.1"/>
    <property type="molecule type" value="Genomic_DNA"/>
</dbReference>
<dbReference type="RefSeq" id="WP_012589695.1">
    <property type="nucleotide sequence ID" value="NC_011666.1"/>
</dbReference>
<dbReference type="SMR" id="B8ENB2"/>
<dbReference type="STRING" id="395965.Msil_0653"/>
<dbReference type="KEGG" id="msl:Msil_0653"/>
<dbReference type="eggNOG" id="COG0416">
    <property type="taxonomic scope" value="Bacteria"/>
</dbReference>
<dbReference type="HOGENOM" id="CLU_039379_1_0_5"/>
<dbReference type="OrthoDB" id="9806408at2"/>
<dbReference type="UniPathway" id="UPA00085"/>
<dbReference type="Proteomes" id="UP000002257">
    <property type="component" value="Chromosome"/>
</dbReference>
<dbReference type="GO" id="GO:0005737">
    <property type="term" value="C:cytoplasm"/>
    <property type="evidence" value="ECO:0007669"/>
    <property type="project" value="UniProtKB-SubCell"/>
</dbReference>
<dbReference type="GO" id="GO:0043811">
    <property type="term" value="F:phosphate:acyl-[acyl carrier protein] acyltransferase activity"/>
    <property type="evidence" value="ECO:0007669"/>
    <property type="project" value="UniProtKB-UniRule"/>
</dbReference>
<dbReference type="GO" id="GO:0006633">
    <property type="term" value="P:fatty acid biosynthetic process"/>
    <property type="evidence" value="ECO:0007669"/>
    <property type="project" value="UniProtKB-UniRule"/>
</dbReference>
<dbReference type="GO" id="GO:0008654">
    <property type="term" value="P:phospholipid biosynthetic process"/>
    <property type="evidence" value="ECO:0007669"/>
    <property type="project" value="UniProtKB-KW"/>
</dbReference>
<dbReference type="Gene3D" id="3.40.718.10">
    <property type="entry name" value="Isopropylmalate Dehydrogenase"/>
    <property type="match status" value="1"/>
</dbReference>
<dbReference type="HAMAP" id="MF_00019">
    <property type="entry name" value="PlsX"/>
    <property type="match status" value="1"/>
</dbReference>
<dbReference type="InterPro" id="IPR003664">
    <property type="entry name" value="FA_synthesis"/>
</dbReference>
<dbReference type="InterPro" id="IPR012281">
    <property type="entry name" value="Phospholipid_synth_PlsX-like"/>
</dbReference>
<dbReference type="NCBIfam" id="TIGR00182">
    <property type="entry name" value="plsX"/>
    <property type="match status" value="1"/>
</dbReference>
<dbReference type="PANTHER" id="PTHR30100">
    <property type="entry name" value="FATTY ACID/PHOSPHOLIPID SYNTHESIS PROTEIN PLSX"/>
    <property type="match status" value="1"/>
</dbReference>
<dbReference type="PANTHER" id="PTHR30100:SF1">
    <property type="entry name" value="PHOSPHATE ACYLTRANSFERASE"/>
    <property type="match status" value="1"/>
</dbReference>
<dbReference type="Pfam" id="PF02504">
    <property type="entry name" value="FA_synthesis"/>
    <property type="match status" value="1"/>
</dbReference>
<dbReference type="PIRSF" id="PIRSF002465">
    <property type="entry name" value="Phsphlp_syn_PlsX"/>
    <property type="match status" value="1"/>
</dbReference>
<dbReference type="SUPFAM" id="SSF53659">
    <property type="entry name" value="Isocitrate/Isopropylmalate dehydrogenase-like"/>
    <property type="match status" value="1"/>
</dbReference>
<name>PLSX_METSB</name>
<keyword id="KW-0963">Cytoplasm</keyword>
<keyword id="KW-0444">Lipid biosynthesis</keyword>
<keyword id="KW-0443">Lipid metabolism</keyword>
<keyword id="KW-0594">Phospholipid biosynthesis</keyword>
<keyword id="KW-1208">Phospholipid metabolism</keyword>
<keyword id="KW-1185">Reference proteome</keyword>
<keyword id="KW-0808">Transferase</keyword>
<reference key="1">
    <citation type="journal article" date="2010" name="J. Bacteriol.">
        <title>Complete genome sequence of the aerobic facultative methanotroph Methylocella silvestris BL2.</title>
        <authorList>
            <person name="Chen Y."/>
            <person name="Crombie A."/>
            <person name="Rahman M.T."/>
            <person name="Dedysh S.N."/>
            <person name="Liesack W."/>
            <person name="Stott M.B."/>
            <person name="Alam M."/>
            <person name="Theisen A.R."/>
            <person name="Murrell J.C."/>
            <person name="Dunfield P.F."/>
        </authorList>
    </citation>
    <scope>NUCLEOTIDE SEQUENCE [LARGE SCALE GENOMIC DNA]</scope>
    <source>
        <strain>DSM 15510 / CIP 108128 / LMG 27833 / NCIMB 13906 / BL2</strain>
    </source>
</reference>
<proteinExistence type="inferred from homology"/>
<gene>
    <name evidence="1" type="primary">plsX</name>
    <name type="ordered locus">Msil_0653</name>
</gene>
<organism>
    <name type="scientific">Methylocella silvestris (strain DSM 15510 / CIP 108128 / LMG 27833 / NCIMB 13906 / BL2)</name>
    <dbReference type="NCBI Taxonomy" id="395965"/>
    <lineage>
        <taxon>Bacteria</taxon>
        <taxon>Pseudomonadati</taxon>
        <taxon>Pseudomonadota</taxon>
        <taxon>Alphaproteobacteria</taxon>
        <taxon>Hyphomicrobiales</taxon>
        <taxon>Beijerinckiaceae</taxon>
        <taxon>Methylocella</taxon>
    </lineage>
</organism>
<protein>
    <recommendedName>
        <fullName evidence="1">Phosphate acyltransferase</fullName>
        <ecNumber evidence="1">2.3.1.274</ecNumber>
    </recommendedName>
    <alternativeName>
        <fullName evidence="1">Acyl-ACP phosphotransacylase</fullName>
    </alternativeName>
    <alternativeName>
        <fullName evidence="1">Acyl-[acyl-carrier-protein]--phosphate acyltransferase</fullName>
    </alternativeName>
    <alternativeName>
        <fullName evidence="1">Phosphate-acyl-ACP acyltransferase</fullName>
    </alternativeName>
</protein>
<comment type="function">
    <text evidence="1">Catalyzes the reversible formation of acyl-phosphate (acyl-PO(4)) from acyl-[acyl-carrier-protein] (acyl-ACP). This enzyme utilizes acyl-ACP as fatty acyl donor, but not acyl-CoA.</text>
</comment>
<comment type="catalytic activity">
    <reaction evidence="1">
        <text>a fatty acyl-[ACP] + phosphate = an acyl phosphate + holo-[ACP]</text>
        <dbReference type="Rhea" id="RHEA:42292"/>
        <dbReference type="Rhea" id="RHEA-COMP:9685"/>
        <dbReference type="Rhea" id="RHEA-COMP:14125"/>
        <dbReference type="ChEBI" id="CHEBI:43474"/>
        <dbReference type="ChEBI" id="CHEBI:59918"/>
        <dbReference type="ChEBI" id="CHEBI:64479"/>
        <dbReference type="ChEBI" id="CHEBI:138651"/>
        <dbReference type="EC" id="2.3.1.274"/>
    </reaction>
</comment>
<comment type="pathway">
    <text evidence="1">Lipid metabolism; phospholipid metabolism.</text>
</comment>
<comment type="subunit">
    <text evidence="1">Homodimer. Probably interacts with PlsY.</text>
</comment>
<comment type="subcellular location">
    <subcellularLocation>
        <location evidence="1">Cytoplasm</location>
    </subcellularLocation>
    <text evidence="1">Associated with the membrane possibly through PlsY.</text>
</comment>
<comment type="similarity">
    <text evidence="1">Belongs to the PlsX family.</text>
</comment>